<sequence length="475" mass="51144">MTAPLPPIAAIATAPGRGGIGVVRVSGPDVRPVMHAICGQALKPRHATYLPFLDGHGKVIDHGLALYFPGPNSYTGEEVLELQGHGGPVVMQMLLTRCLQAGHGIGLRLAEPGEFTRRAFLNDKLDLAQAEAVADLIEASTEAAARSAARSMEGEFSHAIHTLVEKVIHLRMLVEATLDFPEEEIDFLEASDARGQLATIRNDLGNVLAQARQGALLREGLSVVLAGQPNVGKSSLLNALAGAELAIVTPIAGTTRDRVKETIQIEGIPLHIIDTAGLRDEATDEVERIGIERTWDAIRRADIVLHLVDATDYLRHGLSEIDDAIDDRLSGQLPPGAPIVRVVNKIDVAPTVGGMMFSGNRPHVVAANGPNPTEIWISARTGSGIELLRKELLRLVGWQSGNEGTFLARERHLTALRQAQSHLDVAAEQSERQAQALDLFAEELRLAQEHLNSITGEFTSDDLLGTIFTRFCIGK</sequence>
<accession>Q46VM0</accession>
<dbReference type="EC" id="3.6.-.-" evidence="1"/>
<dbReference type="EMBL" id="CP000090">
    <property type="protein sequence ID" value="AAZ62814.1"/>
    <property type="molecule type" value="Genomic_DNA"/>
</dbReference>
<dbReference type="SMR" id="Q46VM0"/>
<dbReference type="STRING" id="264198.Reut_A3456"/>
<dbReference type="KEGG" id="reu:Reut_A3456"/>
<dbReference type="eggNOG" id="COG0486">
    <property type="taxonomic scope" value="Bacteria"/>
</dbReference>
<dbReference type="HOGENOM" id="CLU_019624_4_1_4"/>
<dbReference type="OrthoDB" id="9805918at2"/>
<dbReference type="GO" id="GO:0005829">
    <property type="term" value="C:cytosol"/>
    <property type="evidence" value="ECO:0007669"/>
    <property type="project" value="TreeGrafter"/>
</dbReference>
<dbReference type="GO" id="GO:0005525">
    <property type="term" value="F:GTP binding"/>
    <property type="evidence" value="ECO:0007669"/>
    <property type="project" value="UniProtKB-UniRule"/>
</dbReference>
<dbReference type="GO" id="GO:0003924">
    <property type="term" value="F:GTPase activity"/>
    <property type="evidence" value="ECO:0007669"/>
    <property type="project" value="UniProtKB-UniRule"/>
</dbReference>
<dbReference type="GO" id="GO:0046872">
    <property type="term" value="F:metal ion binding"/>
    <property type="evidence" value="ECO:0007669"/>
    <property type="project" value="UniProtKB-KW"/>
</dbReference>
<dbReference type="GO" id="GO:0030488">
    <property type="term" value="P:tRNA methylation"/>
    <property type="evidence" value="ECO:0007669"/>
    <property type="project" value="TreeGrafter"/>
</dbReference>
<dbReference type="GO" id="GO:0002098">
    <property type="term" value="P:tRNA wobble uridine modification"/>
    <property type="evidence" value="ECO:0007669"/>
    <property type="project" value="TreeGrafter"/>
</dbReference>
<dbReference type="CDD" id="cd04164">
    <property type="entry name" value="trmE"/>
    <property type="match status" value="1"/>
</dbReference>
<dbReference type="CDD" id="cd14858">
    <property type="entry name" value="TrmE_N"/>
    <property type="match status" value="1"/>
</dbReference>
<dbReference type="Gene3D" id="3.40.50.300">
    <property type="entry name" value="P-loop containing nucleotide triphosphate hydrolases"/>
    <property type="match status" value="1"/>
</dbReference>
<dbReference type="Gene3D" id="3.30.1360.120">
    <property type="entry name" value="Probable tRNA modification gtpase trme, domain 1"/>
    <property type="match status" value="1"/>
</dbReference>
<dbReference type="Gene3D" id="1.20.120.430">
    <property type="entry name" value="tRNA modification GTPase MnmE domain 2"/>
    <property type="match status" value="1"/>
</dbReference>
<dbReference type="HAMAP" id="MF_00379">
    <property type="entry name" value="GTPase_MnmE"/>
    <property type="match status" value="1"/>
</dbReference>
<dbReference type="InterPro" id="IPR031168">
    <property type="entry name" value="G_TrmE"/>
</dbReference>
<dbReference type="InterPro" id="IPR006073">
    <property type="entry name" value="GTP-bd"/>
</dbReference>
<dbReference type="InterPro" id="IPR018948">
    <property type="entry name" value="GTP-bd_TrmE_N"/>
</dbReference>
<dbReference type="InterPro" id="IPR004520">
    <property type="entry name" value="GTPase_MnmE"/>
</dbReference>
<dbReference type="InterPro" id="IPR027368">
    <property type="entry name" value="MnmE_dom2"/>
</dbReference>
<dbReference type="InterPro" id="IPR025867">
    <property type="entry name" value="MnmE_helical"/>
</dbReference>
<dbReference type="InterPro" id="IPR027417">
    <property type="entry name" value="P-loop_NTPase"/>
</dbReference>
<dbReference type="InterPro" id="IPR005225">
    <property type="entry name" value="Small_GTP-bd"/>
</dbReference>
<dbReference type="InterPro" id="IPR027266">
    <property type="entry name" value="TrmE/GcvT_dom1"/>
</dbReference>
<dbReference type="NCBIfam" id="TIGR00450">
    <property type="entry name" value="mnmE_trmE_thdF"/>
    <property type="match status" value="1"/>
</dbReference>
<dbReference type="NCBIfam" id="NF003661">
    <property type="entry name" value="PRK05291.1-3"/>
    <property type="match status" value="1"/>
</dbReference>
<dbReference type="NCBIfam" id="TIGR00231">
    <property type="entry name" value="small_GTP"/>
    <property type="match status" value="1"/>
</dbReference>
<dbReference type="PANTHER" id="PTHR42714">
    <property type="entry name" value="TRNA MODIFICATION GTPASE GTPBP3"/>
    <property type="match status" value="1"/>
</dbReference>
<dbReference type="PANTHER" id="PTHR42714:SF2">
    <property type="entry name" value="TRNA MODIFICATION GTPASE GTPBP3, MITOCHONDRIAL"/>
    <property type="match status" value="1"/>
</dbReference>
<dbReference type="Pfam" id="PF01926">
    <property type="entry name" value="MMR_HSR1"/>
    <property type="match status" value="1"/>
</dbReference>
<dbReference type="Pfam" id="PF12631">
    <property type="entry name" value="MnmE_helical"/>
    <property type="match status" value="1"/>
</dbReference>
<dbReference type="Pfam" id="PF10396">
    <property type="entry name" value="TrmE_N"/>
    <property type="match status" value="1"/>
</dbReference>
<dbReference type="PRINTS" id="PR00326">
    <property type="entry name" value="GTP1OBG"/>
</dbReference>
<dbReference type="SUPFAM" id="SSF52540">
    <property type="entry name" value="P-loop containing nucleoside triphosphate hydrolases"/>
    <property type="match status" value="1"/>
</dbReference>
<dbReference type="SUPFAM" id="SSF116878">
    <property type="entry name" value="TrmE connector domain"/>
    <property type="match status" value="1"/>
</dbReference>
<dbReference type="PROSITE" id="PS51709">
    <property type="entry name" value="G_TRME"/>
    <property type="match status" value="1"/>
</dbReference>
<keyword id="KW-0963">Cytoplasm</keyword>
<keyword id="KW-0342">GTP-binding</keyword>
<keyword id="KW-0378">Hydrolase</keyword>
<keyword id="KW-0460">Magnesium</keyword>
<keyword id="KW-0479">Metal-binding</keyword>
<keyword id="KW-0547">Nucleotide-binding</keyword>
<keyword id="KW-0630">Potassium</keyword>
<keyword id="KW-0819">tRNA processing</keyword>
<feature type="chain" id="PRO_0000345880" description="tRNA modification GTPase MnmE">
    <location>
        <begin position="1"/>
        <end position="475"/>
    </location>
</feature>
<feature type="domain" description="TrmE-type G">
    <location>
        <begin position="220"/>
        <end position="397"/>
    </location>
</feature>
<feature type="binding site" evidence="1">
    <location>
        <position position="24"/>
    </location>
    <ligand>
        <name>(6S)-5-formyl-5,6,7,8-tetrahydrofolate</name>
        <dbReference type="ChEBI" id="CHEBI:57457"/>
    </ligand>
</feature>
<feature type="binding site" evidence="1">
    <location>
        <position position="81"/>
    </location>
    <ligand>
        <name>(6S)-5-formyl-5,6,7,8-tetrahydrofolate</name>
        <dbReference type="ChEBI" id="CHEBI:57457"/>
    </ligand>
</feature>
<feature type="binding site" evidence="1">
    <location>
        <position position="124"/>
    </location>
    <ligand>
        <name>(6S)-5-formyl-5,6,7,8-tetrahydrofolate</name>
        <dbReference type="ChEBI" id="CHEBI:57457"/>
    </ligand>
</feature>
<feature type="binding site" evidence="1">
    <location>
        <begin position="230"/>
        <end position="235"/>
    </location>
    <ligand>
        <name>GTP</name>
        <dbReference type="ChEBI" id="CHEBI:37565"/>
    </ligand>
</feature>
<feature type="binding site" evidence="1">
    <location>
        <position position="230"/>
    </location>
    <ligand>
        <name>K(+)</name>
        <dbReference type="ChEBI" id="CHEBI:29103"/>
    </ligand>
</feature>
<feature type="binding site" evidence="1">
    <location>
        <position position="234"/>
    </location>
    <ligand>
        <name>Mg(2+)</name>
        <dbReference type="ChEBI" id="CHEBI:18420"/>
    </ligand>
</feature>
<feature type="binding site" evidence="1">
    <location>
        <begin position="249"/>
        <end position="255"/>
    </location>
    <ligand>
        <name>GTP</name>
        <dbReference type="ChEBI" id="CHEBI:37565"/>
    </ligand>
</feature>
<feature type="binding site" evidence="1">
    <location>
        <position position="249"/>
    </location>
    <ligand>
        <name>K(+)</name>
        <dbReference type="ChEBI" id="CHEBI:29103"/>
    </ligand>
</feature>
<feature type="binding site" evidence="1">
    <location>
        <position position="251"/>
    </location>
    <ligand>
        <name>K(+)</name>
        <dbReference type="ChEBI" id="CHEBI:29103"/>
    </ligand>
</feature>
<feature type="binding site" evidence="1">
    <location>
        <position position="254"/>
    </location>
    <ligand>
        <name>K(+)</name>
        <dbReference type="ChEBI" id="CHEBI:29103"/>
    </ligand>
</feature>
<feature type="binding site" evidence="1">
    <location>
        <position position="255"/>
    </location>
    <ligand>
        <name>Mg(2+)</name>
        <dbReference type="ChEBI" id="CHEBI:18420"/>
    </ligand>
</feature>
<feature type="binding site" evidence="1">
    <location>
        <begin position="274"/>
        <end position="277"/>
    </location>
    <ligand>
        <name>GTP</name>
        <dbReference type="ChEBI" id="CHEBI:37565"/>
    </ligand>
</feature>
<feature type="binding site" evidence="1">
    <location>
        <begin position="378"/>
        <end position="380"/>
    </location>
    <ligand>
        <name>GTP</name>
        <dbReference type="ChEBI" id="CHEBI:37565"/>
    </ligand>
</feature>
<feature type="binding site" evidence="1">
    <location>
        <position position="475"/>
    </location>
    <ligand>
        <name>(6S)-5-formyl-5,6,7,8-tetrahydrofolate</name>
        <dbReference type="ChEBI" id="CHEBI:57457"/>
    </ligand>
</feature>
<proteinExistence type="inferred from homology"/>
<organism>
    <name type="scientific">Cupriavidus pinatubonensis (strain JMP 134 / LMG 1197)</name>
    <name type="common">Cupriavidus necator (strain JMP 134)</name>
    <dbReference type="NCBI Taxonomy" id="264198"/>
    <lineage>
        <taxon>Bacteria</taxon>
        <taxon>Pseudomonadati</taxon>
        <taxon>Pseudomonadota</taxon>
        <taxon>Betaproteobacteria</taxon>
        <taxon>Burkholderiales</taxon>
        <taxon>Burkholderiaceae</taxon>
        <taxon>Cupriavidus</taxon>
    </lineage>
</organism>
<name>MNME_CUPPJ</name>
<gene>
    <name evidence="1" type="primary">mnmE</name>
    <name evidence="1" type="synonym">trmE</name>
    <name type="ordered locus">Reut_A3456</name>
</gene>
<comment type="function">
    <text evidence="1">Exhibits a very high intrinsic GTPase hydrolysis rate. Involved in the addition of a carboxymethylaminomethyl (cmnm) group at the wobble position (U34) of certain tRNAs, forming tRNA-cmnm(5)s(2)U34.</text>
</comment>
<comment type="cofactor">
    <cofactor evidence="1">
        <name>K(+)</name>
        <dbReference type="ChEBI" id="CHEBI:29103"/>
    </cofactor>
    <text evidence="1">Binds 1 potassium ion per subunit.</text>
</comment>
<comment type="subunit">
    <text evidence="1">Homodimer. Heterotetramer of two MnmE and two MnmG subunits.</text>
</comment>
<comment type="subcellular location">
    <subcellularLocation>
        <location evidence="1">Cytoplasm</location>
    </subcellularLocation>
</comment>
<comment type="similarity">
    <text evidence="1">Belongs to the TRAFAC class TrmE-Era-EngA-EngB-Septin-like GTPase superfamily. TrmE GTPase family.</text>
</comment>
<evidence type="ECO:0000255" key="1">
    <source>
        <dbReference type="HAMAP-Rule" id="MF_00379"/>
    </source>
</evidence>
<protein>
    <recommendedName>
        <fullName evidence="1">tRNA modification GTPase MnmE</fullName>
        <ecNumber evidence="1">3.6.-.-</ecNumber>
    </recommendedName>
</protein>
<reference key="1">
    <citation type="journal article" date="2010" name="PLoS ONE">
        <title>The complete multipartite genome sequence of Cupriavidus necator JMP134, a versatile pollutant degrader.</title>
        <authorList>
            <person name="Lykidis A."/>
            <person name="Perez-Pantoja D."/>
            <person name="Ledger T."/>
            <person name="Mavromatis K."/>
            <person name="Anderson I.J."/>
            <person name="Ivanova N.N."/>
            <person name="Hooper S.D."/>
            <person name="Lapidus A."/>
            <person name="Lucas S."/>
            <person name="Gonzalez B."/>
            <person name="Kyrpides N.C."/>
        </authorList>
    </citation>
    <scope>NUCLEOTIDE SEQUENCE [LARGE SCALE GENOMIC DNA]</scope>
    <source>
        <strain>JMP134 / LMG 1197</strain>
    </source>
</reference>